<name>RS15_CANAL</name>
<organism>
    <name type="scientific">Candida albicans (strain SC5314 / ATCC MYA-2876)</name>
    <name type="common">Yeast</name>
    <dbReference type="NCBI Taxonomy" id="237561"/>
    <lineage>
        <taxon>Eukaryota</taxon>
        <taxon>Fungi</taxon>
        <taxon>Dikarya</taxon>
        <taxon>Ascomycota</taxon>
        <taxon>Saccharomycotina</taxon>
        <taxon>Pichiomycetes</taxon>
        <taxon>Debaryomycetaceae</taxon>
        <taxon>Candida/Lodderomyces clade</taxon>
        <taxon>Candida</taxon>
    </lineage>
</organism>
<comment type="function">
    <text evidence="1 5">Component of the ribosome, a large ribonucleoprotein complex responsible for the synthesis of proteins in the cell. The small ribosomal subunit (SSU) binds messenger RNAs (mRNAs) and translates the encoded message by selecting cognate aminoacyl-transfer RNA (tRNA) molecules. The large subunit (LSU) contains the ribosomal catalytic site termed the peptidyl transferase center (PTC), which catalyzes the formation of peptide bonds, thereby polymerizing the amino acids delivered by tRNAs into a polypeptide chain. The nascent polypeptides leave the ribosome through a tunnel in the LSU and interact with protein factors that function in enzymatic processing, targeting, and the membrane insertion of nascent chains at the exit of the ribosomal tunnel (Probable). RPS15 has a role in the late stage of the assembly of pre-40S particles within the nucleus and controls their export to the cytoplasm (By similarity).</text>
</comment>
<comment type="subunit">
    <text evidence="2">Component of the small ribosomal subunit (PubMed:35613268). Mature ribosomes consist of a small (40S) and a large (60S) subunit (PubMed:35613268). The 40S subunit contains about 32 different proteins and 1 molecule of RNA (18S) (PubMed:35613268). The 60S subunit contains 45 different proteins and 3 molecules of RNA (25S, 5.8S and 5S) (PubMed:35613268).</text>
</comment>
<comment type="subcellular location">
    <subcellularLocation>
        <location evidence="5">Cytoplasm</location>
    </subcellularLocation>
</comment>
<comment type="similarity">
    <text evidence="4">Belongs to the universal ribosomal protein uS19 family.</text>
</comment>
<accession>A0A1D8PK22</accession>
<reference key="1">
    <citation type="journal article" date="2004" name="Proc. Natl. Acad. Sci. U.S.A.">
        <title>The diploid genome sequence of Candida albicans.</title>
        <authorList>
            <person name="Jones T."/>
            <person name="Federspiel N.A."/>
            <person name="Chibana H."/>
            <person name="Dungan J."/>
            <person name="Kalman S."/>
            <person name="Magee B.B."/>
            <person name="Newport G."/>
            <person name="Thorstenson Y.R."/>
            <person name="Agabian N."/>
            <person name="Magee P.T."/>
            <person name="Davis R.W."/>
            <person name="Scherer S."/>
        </authorList>
    </citation>
    <scope>NUCLEOTIDE SEQUENCE [LARGE SCALE GENOMIC DNA]</scope>
    <source>
        <strain>SC5314 / ATCC MYA-2876</strain>
    </source>
</reference>
<reference key="2">
    <citation type="journal article" date="2007" name="Genome Biol.">
        <title>Assembly of the Candida albicans genome into sixteen supercontigs aligned on the eight chromosomes.</title>
        <authorList>
            <person name="van het Hoog M."/>
            <person name="Rast T.J."/>
            <person name="Martchenko M."/>
            <person name="Grindle S."/>
            <person name="Dignard D."/>
            <person name="Hogues H."/>
            <person name="Cuomo C."/>
            <person name="Berriman M."/>
            <person name="Scherer S."/>
            <person name="Magee B.B."/>
            <person name="Whiteway M."/>
            <person name="Chibana H."/>
            <person name="Nantel A."/>
            <person name="Magee P.T."/>
        </authorList>
    </citation>
    <scope>GENOME REANNOTATION</scope>
    <source>
        <strain>SC5314 / ATCC MYA-2876</strain>
    </source>
</reference>
<reference key="3">
    <citation type="journal article" date="2013" name="Genome Biol.">
        <title>Assembly of a phased diploid Candida albicans genome facilitates allele-specific measurements and provides a simple model for repeat and indel structure.</title>
        <authorList>
            <person name="Muzzey D."/>
            <person name="Schwartz K."/>
            <person name="Weissman J.S."/>
            <person name="Sherlock G."/>
        </authorList>
    </citation>
    <scope>NUCLEOTIDE SEQUENCE [LARGE SCALE GENOMIC DNA]</scope>
    <scope>GENOME REANNOTATION</scope>
    <source>
        <strain>SC5314 / ATCC MYA-2876</strain>
    </source>
</reference>
<reference evidence="6 7 8" key="4">
    <citation type="journal article" date="2022" name="Sci. Adv.">
        <title>E-site drug specificity of the human pathogen Candida albicans ribosome.</title>
        <authorList>
            <person name="Zgadzay Y."/>
            <person name="Kolosova O."/>
            <person name="Stetsenko A."/>
            <person name="Wu C."/>
            <person name="Bruchlen D."/>
            <person name="Usachev K."/>
            <person name="Validov S."/>
            <person name="Jenner L."/>
            <person name="Rogachev A."/>
            <person name="Yusupova G."/>
            <person name="Sachs M.S."/>
            <person name="Guskov A."/>
            <person name="Yusupov M."/>
        </authorList>
    </citation>
    <scope>STRUCTURE BY ELECTRON MICROSCOPY (2.32 ANGSTROMS) OF THE 80S RIBOSOME</scope>
    <scope>SUBUNIT</scope>
</reference>
<feature type="chain" id="PRO_0000456553" description="Small ribosomal subunit protein uS19">
    <location>
        <begin position="1"/>
        <end position="142"/>
    </location>
</feature>
<gene>
    <name type="primary">RPS15</name>
    <name type="ordered locus">orf19.5927</name>
    <name type="ORF">CAALFM_C304670CA</name>
</gene>
<keyword id="KW-0002">3D-structure</keyword>
<keyword id="KW-0963">Cytoplasm</keyword>
<keyword id="KW-1185">Reference proteome</keyword>
<keyword id="KW-0687">Ribonucleoprotein</keyword>
<keyword id="KW-0689">Ribosomal protein</keyword>
<dbReference type="EMBL" id="CP017625">
    <property type="protein sequence ID" value="AOW28484.1"/>
    <property type="molecule type" value="Genomic_DNA"/>
</dbReference>
<dbReference type="RefSeq" id="XP_019330867.1">
    <property type="nucleotide sequence ID" value="XM_019475322.1"/>
</dbReference>
<dbReference type="PDB" id="7PZY">
    <property type="method" value="EM"/>
    <property type="resolution" value="2.32 A"/>
    <property type="chains" value="Q=1-142"/>
</dbReference>
<dbReference type="PDB" id="7Q08">
    <property type="method" value="EM"/>
    <property type="resolution" value="2.56 A"/>
    <property type="chains" value="Q=1-142"/>
</dbReference>
<dbReference type="PDB" id="7Q0F">
    <property type="method" value="EM"/>
    <property type="resolution" value="2.64 A"/>
    <property type="chains" value="Q=1-142"/>
</dbReference>
<dbReference type="PDB" id="7Q0P">
    <property type="method" value="EM"/>
    <property type="resolution" value="2.77 A"/>
    <property type="chains" value="Q=1-142"/>
</dbReference>
<dbReference type="PDB" id="7Q0R">
    <property type="method" value="EM"/>
    <property type="resolution" value="2.67 A"/>
    <property type="chains" value="Q=1-142"/>
</dbReference>
<dbReference type="PDB" id="8C3A">
    <property type="method" value="X-ray"/>
    <property type="resolution" value="3.00 A"/>
    <property type="chains" value="DC/R=1-142"/>
</dbReference>
<dbReference type="PDB" id="8CQ7">
    <property type="method" value="X-ray"/>
    <property type="resolution" value="3.20 A"/>
    <property type="chains" value="DC/R=1-142"/>
</dbReference>
<dbReference type="PDB" id="8CQW">
    <property type="method" value="X-ray"/>
    <property type="resolution" value="3.05 A"/>
    <property type="chains" value="DC/R=1-142"/>
</dbReference>
<dbReference type="PDB" id="8CRE">
    <property type="method" value="X-ray"/>
    <property type="resolution" value="3.00 A"/>
    <property type="chains" value="DC/R=1-142"/>
</dbReference>
<dbReference type="PDB" id="8OEQ">
    <property type="method" value="X-ray"/>
    <property type="resolution" value="3.30 A"/>
    <property type="chains" value="DC/R=1-142"/>
</dbReference>
<dbReference type="PDB" id="8OGJ">
    <property type="method" value="EM"/>
    <property type="resolution" value="3.10 A"/>
    <property type="chains" value="Q=1-142"/>
</dbReference>
<dbReference type="PDB" id="8OH6">
    <property type="method" value="X-ray"/>
    <property type="resolution" value="3.35 A"/>
    <property type="chains" value="DC/R=1-142"/>
</dbReference>
<dbReference type="PDB" id="8OI5">
    <property type="method" value="X-ray"/>
    <property type="resolution" value="2.90 A"/>
    <property type="chains" value="DC/R=1-142"/>
</dbReference>
<dbReference type="PDB" id="8OJ3">
    <property type="method" value="X-ray"/>
    <property type="resolution" value="3.50 A"/>
    <property type="chains" value="DC/R=1-142"/>
</dbReference>
<dbReference type="PDB" id="8Q5I">
    <property type="method" value="EM"/>
    <property type="resolution" value="2.45 A"/>
    <property type="chains" value="Q=1-142"/>
</dbReference>
<dbReference type="PDBsum" id="7PZY"/>
<dbReference type="PDBsum" id="7Q08"/>
<dbReference type="PDBsum" id="7Q0F"/>
<dbReference type="PDBsum" id="7Q0P"/>
<dbReference type="PDBsum" id="7Q0R"/>
<dbReference type="PDBsum" id="8C3A"/>
<dbReference type="PDBsum" id="8CQ7"/>
<dbReference type="PDBsum" id="8CQW"/>
<dbReference type="PDBsum" id="8CRE"/>
<dbReference type="PDBsum" id="8OEQ"/>
<dbReference type="PDBsum" id="8OGJ"/>
<dbReference type="PDBsum" id="8OH6"/>
<dbReference type="PDBsum" id="8OI5"/>
<dbReference type="PDBsum" id="8OJ3"/>
<dbReference type="PDBsum" id="8Q5I"/>
<dbReference type="EMDB" id="EMD-13737"/>
<dbReference type="EMDB" id="EMD-13741"/>
<dbReference type="EMDB" id="EMD-13744"/>
<dbReference type="EMDB" id="EMD-13749"/>
<dbReference type="EMDB" id="EMD-13750"/>
<dbReference type="EMDB" id="EMD-16874"/>
<dbReference type="SMR" id="A0A1D8PK22"/>
<dbReference type="FunCoup" id="A0A1D8PK22">
    <property type="interactions" value="889"/>
</dbReference>
<dbReference type="STRING" id="237561.A0A1D8PK22"/>
<dbReference type="EnsemblFungi" id="C3_04670C_A-T">
    <property type="protein sequence ID" value="C3_04670C_A-T-p1"/>
    <property type="gene ID" value="C3_04670C_A"/>
</dbReference>
<dbReference type="GeneID" id="3635194"/>
<dbReference type="KEGG" id="cal:CAALFM_C304670CA"/>
<dbReference type="CGD" id="CAL0000179139">
    <property type="gene designation" value="RPS15"/>
</dbReference>
<dbReference type="VEuPathDB" id="FungiDB:C3_04670C_A"/>
<dbReference type="eggNOG" id="KOG0898">
    <property type="taxonomic scope" value="Eukaryota"/>
</dbReference>
<dbReference type="InParanoid" id="A0A1D8PK22"/>
<dbReference type="OMA" id="KTHCRDM"/>
<dbReference type="OrthoDB" id="10258210at2759"/>
<dbReference type="Proteomes" id="UP000000559">
    <property type="component" value="Chromosome 3"/>
</dbReference>
<dbReference type="GO" id="GO:0022627">
    <property type="term" value="C:cytosolic small ribosomal subunit"/>
    <property type="evidence" value="ECO:0000318"/>
    <property type="project" value="GO_Central"/>
</dbReference>
<dbReference type="GO" id="GO:0003723">
    <property type="term" value="F:RNA binding"/>
    <property type="evidence" value="ECO:0007669"/>
    <property type="project" value="InterPro"/>
</dbReference>
<dbReference type="GO" id="GO:0003735">
    <property type="term" value="F:structural constituent of ribosome"/>
    <property type="evidence" value="ECO:0000318"/>
    <property type="project" value="GO_Central"/>
</dbReference>
<dbReference type="GO" id="GO:0000028">
    <property type="term" value="P:ribosomal small subunit assembly"/>
    <property type="evidence" value="ECO:0000318"/>
    <property type="project" value="GO_Central"/>
</dbReference>
<dbReference type="GO" id="GO:0000054">
    <property type="term" value="P:ribosomal subunit export from nucleus"/>
    <property type="evidence" value="ECO:0007669"/>
    <property type="project" value="EnsemblFungi"/>
</dbReference>
<dbReference type="GO" id="GO:0006412">
    <property type="term" value="P:translation"/>
    <property type="evidence" value="ECO:0007669"/>
    <property type="project" value="InterPro"/>
</dbReference>
<dbReference type="FunFam" id="3.30.860.10:FF:000002">
    <property type="entry name" value="40S ribosomal protein S15"/>
    <property type="match status" value="1"/>
</dbReference>
<dbReference type="Gene3D" id="3.30.860.10">
    <property type="entry name" value="30s Ribosomal Protein S19, Chain A"/>
    <property type="match status" value="1"/>
</dbReference>
<dbReference type="HAMAP" id="MF_00531">
    <property type="entry name" value="Ribosomal_uS19"/>
    <property type="match status" value="1"/>
</dbReference>
<dbReference type="InterPro" id="IPR002222">
    <property type="entry name" value="Ribosomal_uS19"/>
</dbReference>
<dbReference type="InterPro" id="IPR020934">
    <property type="entry name" value="Ribosomal_uS19_CS"/>
</dbReference>
<dbReference type="InterPro" id="IPR005713">
    <property type="entry name" value="Ribosomal_uS19_euk/arc"/>
</dbReference>
<dbReference type="InterPro" id="IPR023575">
    <property type="entry name" value="Ribosomal_uS19_SF"/>
</dbReference>
<dbReference type="NCBIfam" id="NF003121">
    <property type="entry name" value="PRK04038.1"/>
    <property type="match status" value="1"/>
</dbReference>
<dbReference type="NCBIfam" id="TIGR01025">
    <property type="entry name" value="uS19_arch"/>
    <property type="match status" value="1"/>
</dbReference>
<dbReference type="PANTHER" id="PTHR11880">
    <property type="entry name" value="RIBOSOMAL PROTEIN S19P FAMILY MEMBER"/>
    <property type="match status" value="1"/>
</dbReference>
<dbReference type="PANTHER" id="PTHR11880:SF2">
    <property type="entry name" value="SMALL RIBOSOMAL SUBUNIT PROTEIN US19"/>
    <property type="match status" value="1"/>
</dbReference>
<dbReference type="Pfam" id="PF00203">
    <property type="entry name" value="Ribosomal_S19"/>
    <property type="match status" value="1"/>
</dbReference>
<dbReference type="PIRSF" id="PIRSF002144">
    <property type="entry name" value="Ribosomal_S19"/>
    <property type="match status" value="1"/>
</dbReference>
<dbReference type="PRINTS" id="PR00975">
    <property type="entry name" value="RIBOSOMALS19"/>
</dbReference>
<dbReference type="SUPFAM" id="SSF54570">
    <property type="entry name" value="Ribosomal protein S19"/>
    <property type="match status" value="1"/>
</dbReference>
<dbReference type="PROSITE" id="PS00323">
    <property type="entry name" value="RIBOSOMAL_S19"/>
    <property type="match status" value="1"/>
</dbReference>
<evidence type="ECO:0000250" key="1">
    <source>
        <dbReference type="UniProtKB" id="Q01855"/>
    </source>
</evidence>
<evidence type="ECO:0000269" key="2">
    <source>
    </source>
</evidence>
<evidence type="ECO:0000303" key="3">
    <source>
    </source>
</evidence>
<evidence type="ECO:0000305" key="4"/>
<evidence type="ECO:0000305" key="5">
    <source>
    </source>
</evidence>
<evidence type="ECO:0007744" key="6">
    <source>
        <dbReference type="PDB" id="7PZY"/>
    </source>
</evidence>
<evidence type="ECO:0007744" key="7">
    <source>
        <dbReference type="PDB" id="7Q0F"/>
    </source>
</evidence>
<evidence type="ECO:0007744" key="8">
    <source>
        <dbReference type="PDB" id="7Q0P"/>
    </source>
</evidence>
<protein>
    <recommendedName>
        <fullName evidence="3">Small ribosomal subunit protein uS19</fullName>
    </recommendedName>
    <alternativeName>
        <fullName>40S ribosomal protein S15</fullName>
    </alternativeName>
</protein>
<proteinExistence type="evidence at protein level"/>
<sequence>MVDATAPKKRTFKQFSFKGVDLKDLVEMPTEEFTKLCGARVRRRFSRGLDSKPMGLIKKLRAARAATEPNERPAVVKTHLRNMIVVPEMIGSVVGVYNGKVFNTVEIKPEMVGHYLGEFSITYTPVRHGRAGNASSKFMPLR</sequence>